<proteinExistence type="inferred from homology"/>
<dbReference type="EC" id="2.7.4.9" evidence="1"/>
<dbReference type="EMBL" id="AE013218">
    <property type="protein sequence ID" value="AAM67895.1"/>
    <property type="status" value="ALT_INIT"/>
    <property type="molecule type" value="Genomic_DNA"/>
</dbReference>
<dbReference type="RefSeq" id="WP_044006053.1">
    <property type="nucleotide sequence ID" value="NC_004061.1"/>
</dbReference>
<dbReference type="SMR" id="Q8K9J3"/>
<dbReference type="STRING" id="198804.BUsg_341"/>
<dbReference type="GeneID" id="93003812"/>
<dbReference type="KEGG" id="bas:BUsg_341"/>
<dbReference type="eggNOG" id="COG0125">
    <property type="taxonomic scope" value="Bacteria"/>
</dbReference>
<dbReference type="HOGENOM" id="CLU_049131_0_1_6"/>
<dbReference type="Proteomes" id="UP000000416">
    <property type="component" value="Chromosome"/>
</dbReference>
<dbReference type="GO" id="GO:0005829">
    <property type="term" value="C:cytosol"/>
    <property type="evidence" value="ECO:0007669"/>
    <property type="project" value="TreeGrafter"/>
</dbReference>
<dbReference type="GO" id="GO:0005524">
    <property type="term" value="F:ATP binding"/>
    <property type="evidence" value="ECO:0007669"/>
    <property type="project" value="UniProtKB-UniRule"/>
</dbReference>
<dbReference type="GO" id="GO:0004798">
    <property type="term" value="F:dTMP kinase activity"/>
    <property type="evidence" value="ECO:0007669"/>
    <property type="project" value="UniProtKB-UniRule"/>
</dbReference>
<dbReference type="GO" id="GO:0006233">
    <property type="term" value="P:dTDP biosynthetic process"/>
    <property type="evidence" value="ECO:0007669"/>
    <property type="project" value="InterPro"/>
</dbReference>
<dbReference type="GO" id="GO:0006235">
    <property type="term" value="P:dTTP biosynthetic process"/>
    <property type="evidence" value="ECO:0007669"/>
    <property type="project" value="UniProtKB-UniRule"/>
</dbReference>
<dbReference type="GO" id="GO:0006227">
    <property type="term" value="P:dUDP biosynthetic process"/>
    <property type="evidence" value="ECO:0007669"/>
    <property type="project" value="TreeGrafter"/>
</dbReference>
<dbReference type="CDD" id="cd01672">
    <property type="entry name" value="TMPK"/>
    <property type="match status" value="1"/>
</dbReference>
<dbReference type="FunFam" id="3.40.50.300:FF:000225">
    <property type="entry name" value="Thymidylate kinase"/>
    <property type="match status" value="1"/>
</dbReference>
<dbReference type="Gene3D" id="3.40.50.300">
    <property type="entry name" value="P-loop containing nucleotide triphosphate hydrolases"/>
    <property type="match status" value="1"/>
</dbReference>
<dbReference type="HAMAP" id="MF_00165">
    <property type="entry name" value="Thymidylate_kinase"/>
    <property type="match status" value="1"/>
</dbReference>
<dbReference type="InterPro" id="IPR027417">
    <property type="entry name" value="P-loop_NTPase"/>
</dbReference>
<dbReference type="InterPro" id="IPR039430">
    <property type="entry name" value="Thymidylate_kin-like_dom"/>
</dbReference>
<dbReference type="InterPro" id="IPR018095">
    <property type="entry name" value="Thymidylate_kin_CS"/>
</dbReference>
<dbReference type="InterPro" id="IPR018094">
    <property type="entry name" value="Thymidylate_kinase"/>
</dbReference>
<dbReference type="NCBIfam" id="TIGR00041">
    <property type="entry name" value="DTMP_kinase"/>
    <property type="match status" value="1"/>
</dbReference>
<dbReference type="PANTHER" id="PTHR10344">
    <property type="entry name" value="THYMIDYLATE KINASE"/>
    <property type="match status" value="1"/>
</dbReference>
<dbReference type="PANTHER" id="PTHR10344:SF4">
    <property type="entry name" value="UMP-CMP KINASE 2, MITOCHONDRIAL"/>
    <property type="match status" value="1"/>
</dbReference>
<dbReference type="Pfam" id="PF02223">
    <property type="entry name" value="Thymidylate_kin"/>
    <property type="match status" value="1"/>
</dbReference>
<dbReference type="SUPFAM" id="SSF52540">
    <property type="entry name" value="P-loop containing nucleoside triphosphate hydrolases"/>
    <property type="match status" value="1"/>
</dbReference>
<dbReference type="PROSITE" id="PS01331">
    <property type="entry name" value="THYMIDYLATE_KINASE"/>
    <property type="match status" value="1"/>
</dbReference>
<protein>
    <recommendedName>
        <fullName evidence="1">Thymidylate kinase</fullName>
        <ecNumber evidence="1">2.7.4.9</ecNumber>
    </recommendedName>
    <alternativeName>
        <fullName evidence="1">dTMP kinase</fullName>
    </alternativeName>
</protein>
<evidence type="ECO:0000255" key="1">
    <source>
        <dbReference type="HAMAP-Rule" id="MF_00165"/>
    </source>
</evidence>
<evidence type="ECO:0000305" key="2"/>
<keyword id="KW-0067">ATP-binding</keyword>
<keyword id="KW-0418">Kinase</keyword>
<keyword id="KW-0545">Nucleotide biosynthesis</keyword>
<keyword id="KW-0547">Nucleotide-binding</keyword>
<keyword id="KW-0808">Transferase</keyword>
<sequence>MIKSKFIVIEGLEGAGKTHACICVQRILKENNIKNVILVRQPGSTPVAEKIRKLIKNNTYIEDFEKETELLLMYAARIQLVKKIIQPALKKGTWVISDRHDLSSLAYQGGGLGIKRKLINKLKYLFLQDFIPDLTIYLDVYPEIGLKRASKRNHLDRIEHRSLTFFKKTRASYLKNIKLDKKIIKINANLNIKIVTQNIKNQILKWLQQKVV</sequence>
<organism>
    <name type="scientific">Buchnera aphidicola subsp. Schizaphis graminum (strain Sg)</name>
    <dbReference type="NCBI Taxonomy" id="198804"/>
    <lineage>
        <taxon>Bacteria</taxon>
        <taxon>Pseudomonadati</taxon>
        <taxon>Pseudomonadota</taxon>
        <taxon>Gammaproteobacteria</taxon>
        <taxon>Enterobacterales</taxon>
        <taxon>Erwiniaceae</taxon>
        <taxon>Buchnera</taxon>
    </lineage>
</organism>
<name>KTHY_BUCAP</name>
<feature type="chain" id="PRO_0000155250" description="Thymidylate kinase">
    <location>
        <begin position="1"/>
        <end position="212"/>
    </location>
</feature>
<feature type="binding site" evidence="1">
    <location>
        <begin position="11"/>
        <end position="18"/>
    </location>
    <ligand>
        <name>ATP</name>
        <dbReference type="ChEBI" id="CHEBI:30616"/>
    </ligand>
</feature>
<comment type="function">
    <text evidence="1">Phosphorylation of dTMP to form dTDP in both de novo and salvage pathways of dTTP synthesis.</text>
</comment>
<comment type="catalytic activity">
    <reaction evidence="1">
        <text>dTMP + ATP = dTDP + ADP</text>
        <dbReference type="Rhea" id="RHEA:13517"/>
        <dbReference type="ChEBI" id="CHEBI:30616"/>
        <dbReference type="ChEBI" id="CHEBI:58369"/>
        <dbReference type="ChEBI" id="CHEBI:63528"/>
        <dbReference type="ChEBI" id="CHEBI:456216"/>
        <dbReference type="EC" id="2.7.4.9"/>
    </reaction>
</comment>
<comment type="similarity">
    <text evidence="1">Belongs to the thymidylate kinase family.</text>
</comment>
<comment type="sequence caution" evidence="2">
    <conflict type="erroneous initiation">
        <sequence resource="EMBL-CDS" id="AAM67895"/>
    </conflict>
</comment>
<accession>Q8K9J3</accession>
<gene>
    <name evidence="1" type="primary">tmk</name>
    <name type="ordered locus">BUsg_341</name>
</gene>
<reference key="1">
    <citation type="journal article" date="2002" name="Science">
        <title>50 million years of genomic stasis in endosymbiotic bacteria.</title>
        <authorList>
            <person name="Tamas I."/>
            <person name="Klasson L."/>
            <person name="Canbaeck B."/>
            <person name="Naeslund A.K."/>
            <person name="Eriksson A.-S."/>
            <person name="Wernegreen J.J."/>
            <person name="Sandstroem J.P."/>
            <person name="Moran N.A."/>
            <person name="Andersson S.G.E."/>
        </authorList>
    </citation>
    <scope>NUCLEOTIDE SEQUENCE [LARGE SCALE GENOMIC DNA]</scope>
    <source>
        <strain>Sg</strain>
    </source>
</reference>